<keyword id="KW-0025">Alternative splicing</keyword>
<keyword id="KW-0963">Cytoplasm</keyword>
<keyword id="KW-0206">Cytoskeleton</keyword>
<keyword id="KW-0967">Endosome</keyword>
<keyword id="KW-1185">Reference proteome</keyword>
<accession>Q8BM85</accession>
<accession>E9Q1W7</accession>
<accession>Q8BWD3</accession>
<accession>Q8BY53</accession>
<gene>
    <name type="primary">Tbck</name>
</gene>
<feature type="chain" id="PRO_0000273279" description="TBC domain-containing protein kinase-like protein">
    <location>
        <begin position="1"/>
        <end position="893"/>
    </location>
</feature>
<feature type="domain" description="Protein kinase" evidence="3">
    <location>
        <begin position="1"/>
        <end position="273"/>
    </location>
</feature>
<feature type="domain" description="Rab-GAP TBC" evidence="4">
    <location>
        <begin position="466"/>
        <end position="651"/>
    </location>
</feature>
<feature type="splice variant" id="VSP_052276" description="In isoform 2." evidence="6">
    <original>EI</original>
    <variation>GF</variation>
    <location>
        <begin position="687"/>
        <end position="688"/>
    </location>
</feature>
<feature type="splice variant" id="VSP_052277" description="In isoform 2." evidence="6">
    <location>
        <begin position="689"/>
        <end position="893"/>
    </location>
</feature>
<feature type="splice variant" id="VSP_062315" description="In isoform 3.">
    <original>SRESIPLSDLKSEVSPR</original>
    <variation>GNKASPVWKMHCAAPRA</variation>
    <location>
        <begin position="746"/>
        <end position="762"/>
    </location>
</feature>
<feature type="splice variant" id="VSP_062316" description="In isoform 3.">
    <location>
        <begin position="763"/>
        <end position="893"/>
    </location>
</feature>
<protein>
    <recommendedName>
        <fullName>TBC domain-containing protein kinase-like protein</fullName>
    </recommendedName>
    <alternativeName>
        <fullName evidence="1">FERRY endosomal RAB5A effector complex subunit 1</fullName>
    </alternativeName>
</protein>
<reference evidence="7 8" key="1">
    <citation type="journal article" date="2005" name="Science">
        <title>The transcriptional landscape of the mammalian genome.</title>
        <authorList>
            <person name="Carninci P."/>
            <person name="Kasukawa T."/>
            <person name="Katayama S."/>
            <person name="Gough J."/>
            <person name="Frith M.C."/>
            <person name="Maeda N."/>
            <person name="Oyama R."/>
            <person name="Ravasi T."/>
            <person name="Lenhard B."/>
            <person name="Wells C."/>
            <person name="Kodzius R."/>
            <person name="Shimokawa K."/>
            <person name="Bajic V.B."/>
            <person name="Brenner S.E."/>
            <person name="Batalov S."/>
            <person name="Forrest A.R."/>
            <person name="Zavolan M."/>
            <person name="Davis M.J."/>
            <person name="Wilming L.G."/>
            <person name="Aidinis V."/>
            <person name="Allen J.E."/>
            <person name="Ambesi-Impiombato A."/>
            <person name="Apweiler R."/>
            <person name="Aturaliya R.N."/>
            <person name="Bailey T.L."/>
            <person name="Bansal M."/>
            <person name="Baxter L."/>
            <person name="Beisel K.W."/>
            <person name="Bersano T."/>
            <person name="Bono H."/>
            <person name="Chalk A.M."/>
            <person name="Chiu K.P."/>
            <person name="Choudhary V."/>
            <person name="Christoffels A."/>
            <person name="Clutterbuck D.R."/>
            <person name="Crowe M.L."/>
            <person name="Dalla E."/>
            <person name="Dalrymple B.P."/>
            <person name="de Bono B."/>
            <person name="Della Gatta G."/>
            <person name="di Bernardo D."/>
            <person name="Down T."/>
            <person name="Engstrom P."/>
            <person name="Fagiolini M."/>
            <person name="Faulkner G."/>
            <person name="Fletcher C.F."/>
            <person name="Fukushima T."/>
            <person name="Furuno M."/>
            <person name="Futaki S."/>
            <person name="Gariboldi M."/>
            <person name="Georgii-Hemming P."/>
            <person name="Gingeras T.R."/>
            <person name="Gojobori T."/>
            <person name="Green R.E."/>
            <person name="Gustincich S."/>
            <person name="Harbers M."/>
            <person name="Hayashi Y."/>
            <person name="Hensch T.K."/>
            <person name="Hirokawa N."/>
            <person name="Hill D."/>
            <person name="Huminiecki L."/>
            <person name="Iacono M."/>
            <person name="Ikeo K."/>
            <person name="Iwama A."/>
            <person name="Ishikawa T."/>
            <person name="Jakt M."/>
            <person name="Kanapin A."/>
            <person name="Katoh M."/>
            <person name="Kawasawa Y."/>
            <person name="Kelso J."/>
            <person name="Kitamura H."/>
            <person name="Kitano H."/>
            <person name="Kollias G."/>
            <person name="Krishnan S.P."/>
            <person name="Kruger A."/>
            <person name="Kummerfeld S.K."/>
            <person name="Kurochkin I.V."/>
            <person name="Lareau L.F."/>
            <person name="Lazarevic D."/>
            <person name="Lipovich L."/>
            <person name="Liu J."/>
            <person name="Liuni S."/>
            <person name="McWilliam S."/>
            <person name="Madan Babu M."/>
            <person name="Madera M."/>
            <person name="Marchionni L."/>
            <person name="Matsuda H."/>
            <person name="Matsuzawa S."/>
            <person name="Miki H."/>
            <person name="Mignone F."/>
            <person name="Miyake S."/>
            <person name="Morris K."/>
            <person name="Mottagui-Tabar S."/>
            <person name="Mulder N."/>
            <person name="Nakano N."/>
            <person name="Nakauchi H."/>
            <person name="Ng P."/>
            <person name="Nilsson R."/>
            <person name="Nishiguchi S."/>
            <person name="Nishikawa S."/>
            <person name="Nori F."/>
            <person name="Ohara O."/>
            <person name="Okazaki Y."/>
            <person name="Orlando V."/>
            <person name="Pang K.C."/>
            <person name="Pavan W.J."/>
            <person name="Pavesi G."/>
            <person name="Pesole G."/>
            <person name="Petrovsky N."/>
            <person name="Piazza S."/>
            <person name="Reed J."/>
            <person name="Reid J.F."/>
            <person name="Ring B.Z."/>
            <person name="Ringwald M."/>
            <person name="Rost B."/>
            <person name="Ruan Y."/>
            <person name="Salzberg S.L."/>
            <person name="Sandelin A."/>
            <person name="Schneider C."/>
            <person name="Schoenbach C."/>
            <person name="Sekiguchi K."/>
            <person name="Semple C.A."/>
            <person name="Seno S."/>
            <person name="Sessa L."/>
            <person name="Sheng Y."/>
            <person name="Shibata Y."/>
            <person name="Shimada H."/>
            <person name="Shimada K."/>
            <person name="Silva D."/>
            <person name="Sinclair B."/>
            <person name="Sperling S."/>
            <person name="Stupka E."/>
            <person name="Sugiura K."/>
            <person name="Sultana R."/>
            <person name="Takenaka Y."/>
            <person name="Taki K."/>
            <person name="Tammoja K."/>
            <person name="Tan S.L."/>
            <person name="Tang S."/>
            <person name="Taylor M.S."/>
            <person name="Tegner J."/>
            <person name="Teichmann S.A."/>
            <person name="Ueda H.R."/>
            <person name="van Nimwegen E."/>
            <person name="Verardo R."/>
            <person name="Wei C.L."/>
            <person name="Yagi K."/>
            <person name="Yamanishi H."/>
            <person name="Zabarovsky E."/>
            <person name="Zhu S."/>
            <person name="Zimmer A."/>
            <person name="Hide W."/>
            <person name="Bult C."/>
            <person name="Grimmond S.M."/>
            <person name="Teasdale R.D."/>
            <person name="Liu E.T."/>
            <person name="Brusic V."/>
            <person name="Quackenbush J."/>
            <person name="Wahlestedt C."/>
            <person name="Mattick J.S."/>
            <person name="Hume D.A."/>
            <person name="Kai C."/>
            <person name="Sasaki D."/>
            <person name="Tomaru Y."/>
            <person name="Fukuda S."/>
            <person name="Kanamori-Katayama M."/>
            <person name="Suzuki M."/>
            <person name="Aoki J."/>
            <person name="Arakawa T."/>
            <person name="Iida J."/>
            <person name="Imamura K."/>
            <person name="Itoh M."/>
            <person name="Kato T."/>
            <person name="Kawaji H."/>
            <person name="Kawagashira N."/>
            <person name="Kawashima T."/>
            <person name="Kojima M."/>
            <person name="Kondo S."/>
            <person name="Konno H."/>
            <person name="Nakano K."/>
            <person name="Ninomiya N."/>
            <person name="Nishio T."/>
            <person name="Okada M."/>
            <person name="Plessy C."/>
            <person name="Shibata K."/>
            <person name="Shiraki T."/>
            <person name="Suzuki S."/>
            <person name="Tagami M."/>
            <person name="Waki K."/>
            <person name="Watahiki A."/>
            <person name="Okamura-Oho Y."/>
            <person name="Suzuki H."/>
            <person name="Kawai J."/>
            <person name="Hayashizaki Y."/>
        </authorList>
    </citation>
    <scope>NUCLEOTIDE SEQUENCE [LARGE SCALE MRNA] (ISOFORMS 1; 2 AND 3)</scope>
    <source>
        <strain evidence="8">C57BL/6J</strain>
        <tissue evidence="8">Embryo</tissue>
        <tissue evidence="10">Mammary gland</tissue>
        <tissue evidence="9">Thymus</tissue>
    </source>
</reference>
<reference key="2">
    <citation type="journal article" date="2009" name="PLoS Biol.">
        <title>Lineage-specific biology revealed by a finished genome assembly of the mouse.</title>
        <authorList>
            <person name="Church D.M."/>
            <person name="Goodstadt L."/>
            <person name="Hillier L.W."/>
            <person name="Zody M.C."/>
            <person name="Goldstein S."/>
            <person name="She X."/>
            <person name="Bult C.J."/>
            <person name="Agarwala R."/>
            <person name="Cherry J.L."/>
            <person name="DiCuccio M."/>
            <person name="Hlavina W."/>
            <person name="Kapustin Y."/>
            <person name="Meric P."/>
            <person name="Maglott D."/>
            <person name="Birtle Z."/>
            <person name="Marques A.C."/>
            <person name="Graves T."/>
            <person name="Zhou S."/>
            <person name="Teague B."/>
            <person name="Potamousis K."/>
            <person name="Churas C."/>
            <person name="Place M."/>
            <person name="Herschleb J."/>
            <person name="Runnheim R."/>
            <person name="Forrest D."/>
            <person name="Amos-Landgraf J."/>
            <person name="Schwartz D.C."/>
            <person name="Cheng Z."/>
            <person name="Lindblad-Toh K."/>
            <person name="Eichler E.E."/>
            <person name="Ponting C.P."/>
        </authorList>
    </citation>
    <scope>NUCLEOTIDE SEQUENCE [LARGE SCALE GENOMIC DNA]</scope>
    <source>
        <strain>C57BL/6J</strain>
    </source>
</reference>
<reference key="3">
    <citation type="journal article" date="2010" name="Cell">
        <title>A tissue-specific atlas of mouse protein phosphorylation and expression.</title>
        <authorList>
            <person name="Huttlin E.L."/>
            <person name="Jedrychowski M.P."/>
            <person name="Elias J.E."/>
            <person name="Goswami T."/>
            <person name="Rad R."/>
            <person name="Beausoleil S.A."/>
            <person name="Villen J."/>
            <person name="Haas W."/>
            <person name="Sowa M.E."/>
            <person name="Gygi S.P."/>
        </authorList>
    </citation>
    <scope>IDENTIFICATION BY MASS SPECTROMETRY [LARGE SCALE ANALYSIS]</scope>
    <source>
        <tissue>Brain</tissue>
        <tissue>Kidney</tissue>
        <tissue>Lung</tissue>
        <tissue>Spleen</tissue>
        <tissue>Testis</tissue>
    </source>
</reference>
<dbReference type="EMBL" id="AK034533">
    <property type="protein sequence ID" value="BAC28746.1"/>
    <property type="molecule type" value="mRNA"/>
</dbReference>
<dbReference type="EMBL" id="AK041928">
    <property type="protein sequence ID" value="BAC31100.1"/>
    <property type="status" value="ALT_INIT"/>
    <property type="molecule type" value="mRNA"/>
</dbReference>
<dbReference type="EMBL" id="AK052841">
    <property type="protein sequence ID" value="BAC35172.1"/>
    <property type="molecule type" value="mRNA"/>
</dbReference>
<dbReference type="EMBL" id="AC135118">
    <property type="status" value="NOT_ANNOTATED_CDS"/>
    <property type="molecule type" value="Genomic_DNA"/>
</dbReference>
<dbReference type="EMBL" id="AC139942">
    <property type="status" value="NOT_ANNOTATED_CDS"/>
    <property type="molecule type" value="Genomic_DNA"/>
</dbReference>
<dbReference type="CCDS" id="CCDS51070.1">
    <molecule id="Q8BM85-1"/>
</dbReference>
<dbReference type="RefSeq" id="NP_001156927.1">
    <molecule id="Q8BM85-1"/>
    <property type="nucleotide sequence ID" value="NM_001163455.2"/>
</dbReference>
<dbReference type="SMR" id="Q8BM85"/>
<dbReference type="BioGRID" id="234859">
    <property type="interactions" value="11"/>
</dbReference>
<dbReference type="FunCoup" id="Q8BM85">
    <property type="interactions" value="1842"/>
</dbReference>
<dbReference type="IntAct" id="Q8BM85">
    <property type="interactions" value="11"/>
</dbReference>
<dbReference type="STRING" id="10090.ENSMUSP00000129205"/>
<dbReference type="iPTMnet" id="Q8BM85"/>
<dbReference type="PhosphoSitePlus" id="Q8BM85"/>
<dbReference type="SwissPalm" id="Q8BM85"/>
<dbReference type="PaxDb" id="10090-ENSMUSP00000129205"/>
<dbReference type="PeptideAtlas" id="Q8BM85"/>
<dbReference type="ProteomicsDB" id="262949">
    <molecule id="Q8BM85-1"/>
</dbReference>
<dbReference type="ProteomicsDB" id="262950">
    <molecule id="Q8BM85-2"/>
</dbReference>
<dbReference type="ProteomicsDB" id="307791"/>
<dbReference type="Pumba" id="Q8BM85"/>
<dbReference type="Antibodypedia" id="26201">
    <property type="antibodies" value="128 antibodies from 20 providers"/>
</dbReference>
<dbReference type="DNASU" id="271981"/>
<dbReference type="Ensembl" id="ENSMUST00000169172.5">
    <molecule id="Q8BM85-1"/>
    <property type="protein sequence ID" value="ENSMUSP00000129205.2"/>
    <property type="gene ID" value="ENSMUSG00000028030.13"/>
</dbReference>
<dbReference type="GeneID" id="271981"/>
<dbReference type="KEGG" id="mmu:271981"/>
<dbReference type="AGR" id="MGI:2445052"/>
<dbReference type="CTD" id="93627"/>
<dbReference type="MGI" id="MGI:2445052">
    <property type="gene designation" value="Tbck"/>
</dbReference>
<dbReference type="VEuPathDB" id="HostDB:ENSMUSG00000028030"/>
<dbReference type="eggNOG" id="KOG1093">
    <property type="taxonomic scope" value="Eukaryota"/>
</dbReference>
<dbReference type="GeneTree" id="ENSGT00940000158244"/>
<dbReference type="HOGENOM" id="CLU_011160_0_0_1"/>
<dbReference type="InParanoid" id="Q8BM85"/>
<dbReference type="OMA" id="THTDRQI"/>
<dbReference type="OrthoDB" id="1668230at2759"/>
<dbReference type="PhylomeDB" id="Q8BM85"/>
<dbReference type="TreeFam" id="TF106242"/>
<dbReference type="BioGRID-ORCS" id="271981">
    <property type="hits" value="3 hits in 80 CRISPR screens"/>
</dbReference>
<dbReference type="ChiTaRS" id="Tbck">
    <property type="organism name" value="mouse"/>
</dbReference>
<dbReference type="PRO" id="PR:Q8BM85"/>
<dbReference type="Proteomes" id="UP000000589">
    <property type="component" value="Chromosome 3"/>
</dbReference>
<dbReference type="RNAct" id="Q8BM85">
    <property type="molecule type" value="protein"/>
</dbReference>
<dbReference type="Bgee" id="ENSMUSG00000028030">
    <property type="expression patterns" value="Expressed in ureter smooth muscle and 222 other cell types or tissues"/>
</dbReference>
<dbReference type="GO" id="GO:0005769">
    <property type="term" value="C:early endosome"/>
    <property type="evidence" value="ECO:0007669"/>
    <property type="project" value="UniProtKB-SubCell"/>
</dbReference>
<dbReference type="GO" id="GO:0030496">
    <property type="term" value="C:midbody"/>
    <property type="evidence" value="ECO:0007669"/>
    <property type="project" value="UniProtKB-SubCell"/>
</dbReference>
<dbReference type="GO" id="GO:0072686">
    <property type="term" value="C:mitotic spindle"/>
    <property type="evidence" value="ECO:0007669"/>
    <property type="project" value="Ensembl"/>
</dbReference>
<dbReference type="GO" id="GO:0030036">
    <property type="term" value="P:actin cytoskeleton organization"/>
    <property type="evidence" value="ECO:0007669"/>
    <property type="project" value="Ensembl"/>
</dbReference>
<dbReference type="GO" id="GO:0008283">
    <property type="term" value="P:cell population proliferation"/>
    <property type="evidence" value="ECO:0007669"/>
    <property type="project" value="Ensembl"/>
</dbReference>
<dbReference type="GO" id="GO:0032006">
    <property type="term" value="P:regulation of TOR signaling"/>
    <property type="evidence" value="ECO:0007669"/>
    <property type="project" value="Ensembl"/>
</dbReference>
<dbReference type="FunFam" id="1.10.472.80:FF:000015">
    <property type="entry name" value="TBC domain-containing protein kinase-like protein"/>
    <property type="match status" value="1"/>
</dbReference>
<dbReference type="FunFam" id="1.10.510.10:FF:000332">
    <property type="entry name" value="TBC domain-containing protein kinase-like protein"/>
    <property type="match status" value="1"/>
</dbReference>
<dbReference type="FunFam" id="3.40.250.10:FF:000018">
    <property type="entry name" value="TBC domain-containing protein kinase-like protein"/>
    <property type="match status" value="1"/>
</dbReference>
<dbReference type="FunFam" id="1.10.8.270:FF:000012">
    <property type="entry name" value="TBC domain-containing protein kinase-like protein-like"/>
    <property type="match status" value="1"/>
</dbReference>
<dbReference type="Gene3D" id="1.10.8.270">
    <property type="entry name" value="putative rabgap domain of human tbc1 domain family member 14 like domains"/>
    <property type="match status" value="1"/>
</dbReference>
<dbReference type="Gene3D" id="3.40.250.10">
    <property type="entry name" value="Rhodanese-like domain"/>
    <property type="match status" value="1"/>
</dbReference>
<dbReference type="Gene3D" id="1.10.510.10">
    <property type="entry name" value="Transferase(Phosphotransferase) domain 1"/>
    <property type="match status" value="1"/>
</dbReference>
<dbReference type="Gene3D" id="1.10.472.80">
    <property type="entry name" value="Ypt/Rab-GAP domain of gyp1p, domain 3"/>
    <property type="match status" value="1"/>
</dbReference>
<dbReference type="InterPro" id="IPR011009">
    <property type="entry name" value="Kinase-like_dom_sf"/>
</dbReference>
<dbReference type="InterPro" id="IPR000719">
    <property type="entry name" value="Prot_kinase_dom"/>
</dbReference>
<dbReference type="InterPro" id="IPR000195">
    <property type="entry name" value="Rab-GAP-TBC_dom"/>
</dbReference>
<dbReference type="InterPro" id="IPR035969">
    <property type="entry name" value="Rab-GAP_TBC_sf"/>
</dbReference>
<dbReference type="InterPro" id="IPR001763">
    <property type="entry name" value="Rhodanese-like_dom"/>
</dbReference>
<dbReference type="InterPro" id="IPR036873">
    <property type="entry name" value="Rhodanese-like_dom_sf"/>
</dbReference>
<dbReference type="PANTHER" id="PTHR24345">
    <property type="entry name" value="SERINE/THREONINE-PROTEIN KINASE PLK"/>
    <property type="match status" value="1"/>
</dbReference>
<dbReference type="PANTHER" id="PTHR24345:SF87">
    <property type="entry name" value="TBC1 DOMAIN CONTAINING KINASE"/>
    <property type="match status" value="1"/>
</dbReference>
<dbReference type="Pfam" id="PF00069">
    <property type="entry name" value="Pkinase"/>
    <property type="match status" value="1"/>
</dbReference>
<dbReference type="Pfam" id="PF00566">
    <property type="entry name" value="RabGAP-TBC"/>
    <property type="match status" value="1"/>
</dbReference>
<dbReference type="Pfam" id="PF00581">
    <property type="entry name" value="Rhodanese"/>
    <property type="match status" value="1"/>
</dbReference>
<dbReference type="SMART" id="SM00450">
    <property type="entry name" value="RHOD"/>
    <property type="match status" value="1"/>
</dbReference>
<dbReference type="SMART" id="SM00164">
    <property type="entry name" value="TBC"/>
    <property type="match status" value="1"/>
</dbReference>
<dbReference type="SUPFAM" id="SSF56112">
    <property type="entry name" value="Protein kinase-like (PK-like)"/>
    <property type="match status" value="1"/>
</dbReference>
<dbReference type="SUPFAM" id="SSF52821">
    <property type="entry name" value="Rhodanese/Cell cycle control phosphatase"/>
    <property type="match status" value="1"/>
</dbReference>
<dbReference type="SUPFAM" id="SSF47923">
    <property type="entry name" value="Ypt/Rab-GAP domain of gyp1p"/>
    <property type="match status" value="2"/>
</dbReference>
<dbReference type="PROSITE" id="PS50011">
    <property type="entry name" value="PROTEIN_KINASE_DOM"/>
    <property type="match status" value="1"/>
</dbReference>
<dbReference type="PROSITE" id="PS50086">
    <property type="entry name" value="TBC_RABGAP"/>
    <property type="match status" value="1"/>
</dbReference>
<proteinExistence type="evidence at protein level"/>
<sequence>MFPLKDAEMGAFTFFASALPHDVCGSNGLPLTPNSIKILGRFQILKTITHPRLCQYVDISRGKHERLVVVAEHCERSLEDLLRERKPVSHSTVLCIAYEVLEGLHYLNKHGIVHRALSPHNILLDRKGHIKLAKFGLYHMTAHGDDVDFPIGYPSYLAPEVIAQGIPKTTDHVPSEKPLPSGPKSDVWSLGIILFELCVGRKLFQSLDVSERVKFLLTLGCVDDTIIVLAEEHGCLDIIKELPENVINILKKCLTFHPSKRPTPDELMKDQVFSEVSPLYTPFIKPASLFSSSLRCADLTLPEDISDLCKDIDNDYLAERSIEEVYYLWCLAGGDLEKELINKEIIRSKPPVCTLPNFLFEDGESFGQGRDRSSLLDDTTVTLSLCQLRNRLKDVGGEAFYPLLEDDQSNLPHSNSNNELSAAATLPLIIRERDTEYQLNRIILFDRLLKAYPYKKNQIWKEARVDIPPLMRGLTWAALLGVEGAIHAKYDAIDKDTPIPTDRQIEVDIPRCHQYDELLSSPEGHAKFRRVLKAWVVSHPDLVYWQGLDSLCAPFLYLNFNNEALAYACMSAFIPKYLYNFFLKDNSHVIQEYLTVFSQMIAFHDPELSNHLNEIGFIPDLYAIPWFLTMFTHVFPLHKIFHLWDTLLLGNSSFPFCIGVAILQQLRDRLLANGFNECILLFSDLPEIDIERCVRESVNLFCWTPKSATYRQHAQPPKPASESSVVRSSAPYFSAECTDPPKTDLSRESIPLSDLKSEVSPRISAEDLIDLCELTVTGHFKTPTKKTKSSKPKLLVVDIRNSEDFVRGHIAGSINIPFSAAFTAEGELSQGPYTTMLHNFKGKVIVVVGHVAKQTAEFAAHLVKMKYPRVCILDGGINKIRPTGLLTVPSPQI</sequence>
<comment type="function">
    <text evidence="1">Component of the FERRY complex (Five-subunit Endosomal Rab5 and RNA/ribosome intermediary). The FERRY complex directly interacts with mRNAs and RAB5A, and functions as a RAB5A effector involved in the localization and the distribution of specific mRNAs most likely by mediating their endosomal transport. The complex recruits mRNAs and ribosomes to early endosomes through direct mRNA-interaction (By similarity). Also involved in the modulation of mTOR signaling and expression of mTOR complex components. Involved in the control of actin-cytoskeleton organization (By similarity).</text>
</comment>
<comment type="subunit">
    <text evidence="1">Component of the FERRY complex composed of five subunits, TBCK, PPP1R21, FERRY3, CRYZL1 and GATD1 with a ratio of 1:2:1:2:4, respectively.</text>
</comment>
<comment type="subcellular location">
    <subcellularLocation>
        <location evidence="1">Cytoplasm</location>
    </subcellularLocation>
    <subcellularLocation>
        <location evidence="1">Cytoplasm</location>
        <location evidence="1">Cytoskeleton</location>
        <location evidence="1">Spindle</location>
    </subcellularLocation>
    <subcellularLocation>
        <location evidence="1">Midbody</location>
    </subcellularLocation>
    <subcellularLocation>
        <location evidence="1">Early endosome</location>
    </subcellularLocation>
    <text evidence="1">Mainly localized in the cytoplasm during interphase. During metaphase, TBCK accumulates at the mitotic spindle. At the end of mitosis, it is detected at the midbody.</text>
</comment>
<comment type="alternative products">
    <event type="alternative splicing"/>
    <isoform>
        <id>Q8BM85-1</id>
        <name evidence="5">1</name>
        <sequence type="displayed"/>
    </isoform>
    <isoform>
        <id>Q8BM85-2</id>
        <name evidence="5">2</name>
        <sequence type="described" ref="VSP_052276 VSP_052277"/>
    </isoform>
    <isoform>
        <id>Q8BM85-3</id>
        <name>3</name>
        <sequence type="described" ref="VSP_062315 VSP_062316"/>
    </isoform>
</comment>
<comment type="domain">
    <text evidence="2">The protein kinase domain is predicted to be catalytically inactive.</text>
</comment>
<comment type="similarity">
    <text evidence="7">Belongs to the protein kinase superfamily.</text>
</comment>
<comment type="sequence caution" evidence="7">
    <conflict type="erroneous initiation">
        <sequence resource="EMBL-CDS" id="BAC31100"/>
    </conflict>
</comment>
<organism>
    <name type="scientific">Mus musculus</name>
    <name type="common">Mouse</name>
    <dbReference type="NCBI Taxonomy" id="10090"/>
    <lineage>
        <taxon>Eukaryota</taxon>
        <taxon>Metazoa</taxon>
        <taxon>Chordata</taxon>
        <taxon>Craniata</taxon>
        <taxon>Vertebrata</taxon>
        <taxon>Euteleostomi</taxon>
        <taxon>Mammalia</taxon>
        <taxon>Eutheria</taxon>
        <taxon>Euarchontoglires</taxon>
        <taxon>Glires</taxon>
        <taxon>Rodentia</taxon>
        <taxon>Myomorpha</taxon>
        <taxon>Muroidea</taxon>
        <taxon>Muridae</taxon>
        <taxon>Murinae</taxon>
        <taxon>Mus</taxon>
        <taxon>Mus</taxon>
    </lineage>
</organism>
<name>TBCK_MOUSE</name>
<evidence type="ECO:0000250" key="1">
    <source>
        <dbReference type="UniProtKB" id="Q8TEA7"/>
    </source>
</evidence>
<evidence type="ECO:0000255" key="2"/>
<evidence type="ECO:0000255" key="3">
    <source>
        <dbReference type="PROSITE-ProRule" id="PRU00159"/>
    </source>
</evidence>
<evidence type="ECO:0000255" key="4">
    <source>
        <dbReference type="PROSITE-ProRule" id="PRU00163"/>
    </source>
</evidence>
<evidence type="ECO:0000269" key="5">
    <source>
    </source>
</evidence>
<evidence type="ECO:0000303" key="6">
    <source>
    </source>
</evidence>
<evidence type="ECO:0000305" key="7"/>
<evidence type="ECO:0000312" key="8">
    <source>
        <dbReference type="EMBL" id="BAC28746.1"/>
    </source>
</evidence>
<evidence type="ECO:0000312" key="9">
    <source>
        <dbReference type="EMBL" id="BAC31100.1"/>
    </source>
</evidence>
<evidence type="ECO:0000312" key="10">
    <source>
        <dbReference type="EMBL" id="BAC35172.1"/>
    </source>
</evidence>